<feature type="chain" id="PRO_1000061328" description="Flap endonuclease 1">
    <location>
        <begin position="1"/>
        <end position="328"/>
    </location>
</feature>
<feature type="region of interest" description="N-domain">
    <location>
        <begin position="1"/>
        <end position="98"/>
    </location>
</feature>
<feature type="region of interest" description="I-domain">
    <location>
        <begin position="116"/>
        <end position="248"/>
    </location>
</feature>
<feature type="region of interest" description="Interaction with PCNA" evidence="2">
    <location>
        <begin position="320"/>
        <end position="328"/>
    </location>
</feature>
<feature type="binding site" evidence="2">
    <location>
        <position position="27"/>
    </location>
    <ligand>
        <name>Mg(2+)</name>
        <dbReference type="ChEBI" id="CHEBI:18420"/>
        <label>1</label>
    </ligand>
</feature>
<feature type="binding site" evidence="2">
    <location>
        <position position="80"/>
    </location>
    <ligand>
        <name>Mg(2+)</name>
        <dbReference type="ChEBI" id="CHEBI:18420"/>
        <label>1</label>
    </ligand>
</feature>
<feature type="binding site" evidence="2">
    <location>
        <position position="152"/>
    </location>
    <ligand>
        <name>Mg(2+)</name>
        <dbReference type="ChEBI" id="CHEBI:18420"/>
        <label>1</label>
    </ligand>
</feature>
<feature type="binding site" evidence="2">
    <location>
        <position position="154"/>
    </location>
    <ligand>
        <name>Mg(2+)</name>
        <dbReference type="ChEBI" id="CHEBI:18420"/>
        <label>1</label>
    </ligand>
</feature>
<feature type="binding site" evidence="2">
    <location>
        <position position="173"/>
    </location>
    <ligand>
        <name>Mg(2+)</name>
        <dbReference type="ChEBI" id="CHEBI:18420"/>
        <label>2</label>
    </ligand>
</feature>
<feature type="binding site" evidence="2">
    <location>
        <position position="175"/>
    </location>
    <ligand>
        <name>Mg(2+)</name>
        <dbReference type="ChEBI" id="CHEBI:18420"/>
        <label>2</label>
    </ligand>
</feature>
<feature type="binding site" evidence="2">
    <location>
        <position position="227"/>
    </location>
    <ligand>
        <name>Mg(2+)</name>
        <dbReference type="ChEBI" id="CHEBI:18420"/>
        <label>2</label>
    </ligand>
</feature>
<comment type="function">
    <text evidence="1">Structure-specific nuclease with 5'-flap endonuclease and 5'-3' exonuclease activities involved in DNA replication and repair. During DNA replication, cleaves the 5'-overhanging flap structure that is generated by displacement synthesis when DNA polymerase encounters the 5'-end of a downstream Okazaki fragment. Binds the unpaired 3'-DNA end and kinks the DNA to facilitate 5' cleavage specificity. Cleaves one nucleotide into the double-stranded DNA from the junction in flap DNA, leaving a nick for ligation. Also involved in the base excision repair (BER) pathway. Acts as a genome stabilization factor that prevents flaps from equilibrating into structures that lead to duplications and deletions. Also possesses 5'-3' exonuclease activity on nicked or gapped double-stranded DNA (By similarity).</text>
</comment>
<comment type="cofactor">
    <cofactor evidence="2">
        <name>Mg(2+)</name>
        <dbReference type="ChEBI" id="CHEBI:18420"/>
    </cofactor>
    <text evidence="2">Binds 2 magnesium ions per subunit. They probably participate in the reaction catalyzed by the enzyme. May bind an additional third magnesium ion after substrate binding.</text>
</comment>
<comment type="subunit">
    <text evidence="2">Interacts with PCNA. PCNA stimulates the nuclease activity without altering cleavage specificity.</text>
</comment>
<comment type="similarity">
    <text evidence="2">Belongs to the XPG/RAD2 endonuclease family. FEN1 subfamily.</text>
</comment>
<accession>Q2NFD4</accession>
<proteinExistence type="inferred from homology"/>
<sequence length="328" mass="37297">MGVKFKDITNPEPIEMKELEGKILTVDASNVIYKFLSSMRQTDGTPLRDLNGHITSHLNGIMFQTSTLIEKDIKPVYVFDGKAPDLKKETQEERINIKKESEKKYLEAKEVGDVVAARKYAARTTHLNKEIIKSSKKLLDLMGIPYVQARTEGEAQASYMVSQNDAWAVVSQDYDCLQFGATRMIRNLKLSKSNSKNLELISLEKTLKELNLTREQLVDVAMLVGTDFNKGVYGIGAKKGIKLIHKYGTLEKALESLNETMEVDAELIREIFLNPNVVHNYTIEFKRPKKSQLLDFLCGEHDFDERRTISAIKKLQAKTAQSSLEDWF</sequence>
<evidence type="ECO:0000250" key="1"/>
<evidence type="ECO:0000255" key="2">
    <source>
        <dbReference type="HAMAP-Rule" id="MF_00614"/>
    </source>
</evidence>
<gene>
    <name evidence="2" type="primary">fen</name>
    <name type="ordered locus">Msp_1086</name>
</gene>
<name>FEN_METST</name>
<dbReference type="EC" id="3.1.-.-" evidence="2"/>
<dbReference type="EMBL" id="CP000102">
    <property type="protein sequence ID" value="ABC57469.1"/>
    <property type="molecule type" value="Genomic_DNA"/>
</dbReference>
<dbReference type="RefSeq" id="WP_011406668.1">
    <property type="nucleotide sequence ID" value="NC_007681.1"/>
</dbReference>
<dbReference type="SMR" id="Q2NFD4"/>
<dbReference type="STRING" id="339860.Msp_1086"/>
<dbReference type="GeneID" id="41325655"/>
<dbReference type="KEGG" id="mst:Msp_1086"/>
<dbReference type="eggNOG" id="arCOG04050">
    <property type="taxonomic scope" value="Archaea"/>
</dbReference>
<dbReference type="HOGENOM" id="CLU_032444_0_0_2"/>
<dbReference type="OrthoDB" id="9593at2157"/>
<dbReference type="Proteomes" id="UP000001931">
    <property type="component" value="Chromosome"/>
</dbReference>
<dbReference type="GO" id="GO:0008409">
    <property type="term" value="F:5'-3' exonuclease activity"/>
    <property type="evidence" value="ECO:0007669"/>
    <property type="project" value="UniProtKB-UniRule"/>
</dbReference>
<dbReference type="GO" id="GO:0017108">
    <property type="term" value="F:5'-flap endonuclease activity"/>
    <property type="evidence" value="ECO:0007669"/>
    <property type="project" value="UniProtKB-UniRule"/>
</dbReference>
<dbReference type="GO" id="GO:0003677">
    <property type="term" value="F:DNA binding"/>
    <property type="evidence" value="ECO:0007669"/>
    <property type="project" value="UniProtKB-UniRule"/>
</dbReference>
<dbReference type="GO" id="GO:0000287">
    <property type="term" value="F:magnesium ion binding"/>
    <property type="evidence" value="ECO:0007669"/>
    <property type="project" value="UniProtKB-UniRule"/>
</dbReference>
<dbReference type="GO" id="GO:0006281">
    <property type="term" value="P:DNA repair"/>
    <property type="evidence" value="ECO:0007669"/>
    <property type="project" value="UniProtKB-UniRule"/>
</dbReference>
<dbReference type="GO" id="GO:0043137">
    <property type="term" value="P:DNA replication, removal of RNA primer"/>
    <property type="evidence" value="ECO:0007669"/>
    <property type="project" value="UniProtKB-UniRule"/>
</dbReference>
<dbReference type="CDD" id="cd09867">
    <property type="entry name" value="PIN_FEN1"/>
    <property type="match status" value="1"/>
</dbReference>
<dbReference type="FunFam" id="3.40.50.1010:FF:000016">
    <property type="entry name" value="Flap endonuclease 1"/>
    <property type="match status" value="1"/>
</dbReference>
<dbReference type="Gene3D" id="1.10.150.20">
    <property type="entry name" value="5' to 3' exonuclease, C-terminal subdomain"/>
    <property type="match status" value="1"/>
</dbReference>
<dbReference type="Gene3D" id="3.40.50.1010">
    <property type="entry name" value="5'-nuclease"/>
    <property type="match status" value="1"/>
</dbReference>
<dbReference type="HAMAP" id="MF_00614">
    <property type="entry name" value="Fen"/>
    <property type="match status" value="1"/>
</dbReference>
<dbReference type="InterPro" id="IPR002421">
    <property type="entry name" value="5-3_exonuclease"/>
</dbReference>
<dbReference type="InterPro" id="IPR036279">
    <property type="entry name" value="5-3_exonuclease_C_sf"/>
</dbReference>
<dbReference type="InterPro" id="IPR023426">
    <property type="entry name" value="Flap_endonuc"/>
</dbReference>
<dbReference type="InterPro" id="IPR019973">
    <property type="entry name" value="Flap_endonuc_arc"/>
</dbReference>
<dbReference type="InterPro" id="IPR008918">
    <property type="entry name" value="HhH2"/>
</dbReference>
<dbReference type="InterPro" id="IPR029060">
    <property type="entry name" value="PIN-like_dom_sf"/>
</dbReference>
<dbReference type="InterPro" id="IPR006086">
    <property type="entry name" value="XPG-I_dom"/>
</dbReference>
<dbReference type="InterPro" id="IPR006084">
    <property type="entry name" value="XPG/Rad2"/>
</dbReference>
<dbReference type="InterPro" id="IPR019974">
    <property type="entry name" value="XPG_CS"/>
</dbReference>
<dbReference type="InterPro" id="IPR006085">
    <property type="entry name" value="XPG_DNA_repair_N"/>
</dbReference>
<dbReference type="NCBIfam" id="TIGR03674">
    <property type="entry name" value="fen_arch"/>
    <property type="match status" value="1"/>
</dbReference>
<dbReference type="PANTHER" id="PTHR11081:SF9">
    <property type="entry name" value="FLAP ENDONUCLEASE 1"/>
    <property type="match status" value="1"/>
</dbReference>
<dbReference type="PANTHER" id="PTHR11081">
    <property type="entry name" value="FLAP ENDONUCLEASE FAMILY MEMBER"/>
    <property type="match status" value="1"/>
</dbReference>
<dbReference type="Pfam" id="PF00867">
    <property type="entry name" value="XPG_I"/>
    <property type="match status" value="1"/>
</dbReference>
<dbReference type="Pfam" id="PF00752">
    <property type="entry name" value="XPG_N"/>
    <property type="match status" value="1"/>
</dbReference>
<dbReference type="PRINTS" id="PR00853">
    <property type="entry name" value="XPGRADSUPER"/>
</dbReference>
<dbReference type="SMART" id="SM00475">
    <property type="entry name" value="53EXOc"/>
    <property type="match status" value="1"/>
</dbReference>
<dbReference type="SMART" id="SM00279">
    <property type="entry name" value="HhH2"/>
    <property type="match status" value="1"/>
</dbReference>
<dbReference type="SMART" id="SM00484">
    <property type="entry name" value="XPGI"/>
    <property type="match status" value="1"/>
</dbReference>
<dbReference type="SMART" id="SM00485">
    <property type="entry name" value="XPGN"/>
    <property type="match status" value="1"/>
</dbReference>
<dbReference type="SUPFAM" id="SSF47807">
    <property type="entry name" value="5' to 3' exonuclease, C-terminal subdomain"/>
    <property type="match status" value="1"/>
</dbReference>
<dbReference type="SUPFAM" id="SSF88723">
    <property type="entry name" value="PIN domain-like"/>
    <property type="match status" value="1"/>
</dbReference>
<dbReference type="PROSITE" id="PS00841">
    <property type="entry name" value="XPG_1"/>
    <property type="match status" value="1"/>
</dbReference>
<protein>
    <recommendedName>
        <fullName evidence="2">Flap endonuclease 1</fullName>
        <shortName evidence="2">FEN-1</shortName>
        <ecNumber evidence="2">3.1.-.-</ecNumber>
    </recommendedName>
    <alternativeName>
        <fullName evidence="2">Flap structure-specific endonuclease 1</fullName>
    </alternativeName>
</protein>
<organism>
    <name type="scientific">Methanosphaera stadtmanae (strain ATCC 43021 / DSM 3091 / JCM 11832 / MCB-3)</name>
    <dbReference type="NCBI Taxonomy" id="339860"/>
    <lineage>
        <taxon>Archaea</taxon>
        <taxon>Methanobacteriati</taxon>
        <taxon>Methanobacteriota</taxon>
        <taxon>Methanomada group</taxon>
        <taxon>Methanobacteria</taxon>
        <taxon>Methanobacteriales</taxon>
        <taxon>Methanobacteriaceae</taxon>
        <taxon>Methanosphaera</taxon>
    </lineage>
</organism>
<reference key="1">
    <citation type="journal article" date="2006" name="J. Bacteriol.">
        <title>The genome sequence of Methanosphaera stadtmanae reveals why this human intestinal archaeon is restricted to methanol and H2 for methane formation and ATP synthesis.</title>
        <authorList>
            <person name="Fricke W.F."/>
            <person name="Seedorf H."/>
            <person name="Henne A."/>
            <person name="Kruer M."/>
            <person name="Liesegang H."/>
            <person name="Hedderich R."/>
            <person name="Gottschalk G."/>
            <person name="Thauer R.K."/>
        </authorList>
    </citation>
    <scope>NUCLEOTIDE SEQUENCE [LARGE SCALE GENOMIC DNA]</scope>
    <source>
        <strain>ATCC 43021 / DSM 3091 / JCM 11832 / MCB-3</strain>
    </source>
</reference>
<keyword id="KW-0227">DNA damage</keyword>
<keyword id="KW-0234">DNA repair</keyword>
<keyword id="KW-0235">DNA replication</keyword>
<keyword id="KW-0255">Endonuclease</keyword>
<keyword id="KW-0269">Exonuclease</keyword>
<keyword id="KW-0378">Hydrolase</keyword>
<keyword id="KW-0460">Magnesium</keyword>
<keyword id="KW-0479">Metal-binding</keyword>
<keyword id="KW-0540">Nuclease</keyword>
<keyword id="KW-1185">Reference proteome</keyword>